<gene>
    <name type="primary">Mcts1</name>
</gene>
<organism>
    <name type="scientific">Mus musculus</name>
    <name type="common">Mouse</name>
    <dbReference type="NCBI Taxonomy" id="10090"/>
    <lineage>
        <taxon>Eukaryota</taxon>
        <taxon>Metazoa</taxon>
        <taxon>Chordata</taxon>
        <taxon>Craniata</taxon>
        <taxon>Vertebrata</taxon>
        <taxon>Euteleostomi</taxon>
        <taxon>Mammalia</taxon>
        <taxon>Eutheria</taxon>
        <taxon>Euarchontoglires</taxon>
        <taxon>Glires</taxon>
        <taxon>Rodentia</taxon>
        <taxon>Myomorpha</taxon>
        <taxon>Muroidea</taxon>
        <taxon>Muridae</taxon>
        <taxon>Murinae</taxon>
        <taxon>Mus</taxon>
        <taxon>Mus</taxon>
    </lineage>
</organism>
<sequence>MFKKFDEKENVSNCIQLKTSVIKGIKNQLLEQFPGIEPWLNQIMPKKDPVKIVRCHEHIEILTVNGELLFFRQREGPFYPTLRLLHKYPFILPHQQVDKGAIKFVLSGANIMCPGLTSPGAKLYPAAVDTIVAIMAEGKQHALCVGVMKMSAEDIEKVNKGIGIENIHYLNDGLWHMKTYK</sequence>
<comment type="function">
    <text evidence="2">Translation regulator forming a complex with DENR to promote translation reinitiation. Translation reinitiation is the process where the small ribosomal subunit remains attached to the mRNA following termination of translation of a regulatory upstream ORF (uORF), and resume scanning on the same mRNA molecule to initiate translation of a downstream ORF, usually the main ORF (mORF). The MCTS1/DENR complex is pivotal to two linked mechanisms essential for translation reinitiation. Firstly, the dissociation of deacylated tRNAs from post-termination 40S ribosomal complexes during ribosome recycling. Secondly, the recruitment in an EIF2-independent manner of aminoacylated initiator tRNA to P site of 40S ribosomes for a new round of translation. This regulatory mechanism governs the translation of more than 150 genes which translation reinitiation is MCTS1/DENR complex-dependent. Consequently, modulates various unrelated biological processes including cell cycle regulation and DNA damage signaling and repair. Notably, it positively regulates interferon gamma immunity to mycobacteria by enhancing the translation of JAK2.</text>
</comment>
<comment type="subunit">
    <text evidence="2">Interacts (via PUA domain) with DENR; the complex regulates translation reinitiation.</text>
</comment>
<comment type="subcellular location">
    <subcellularLocation>
        <location evidence="2">Cytoplasm</location>
    </subcellularLocation>
    <text evidence="2">Nuclear relocalization after DNA damage.</text>
</comment>
<comment type="alternative products">
    <event type="alternative splicing"/>
    <isoform>
        <id>Q9DB27-1</id>
        <name>1</name>
        <sequence type="displayed"/>
    </isoform>
    <isoform>
        <id>Q9DB27-2</id>
        <name>2</name>
        <sequence type="described" ref="VSP_034857"/>
    </isoform>
</comment>
<comment type="domain">
    <text evidence="1">The PUA RNA-binding domain is critical for cap binding, but not sufficient for translation enhancer function. MCT1 N-terminal region is required to enhance translation possibly through interaction with other proteins (By similarity).</text>
</comment>
<comment type="PTM">
    <text evidence="1">Phosphorylation is critical for stabilization and promotion of cell proliferation.</text>
</comment>
<comment type="similarity">
    <text evidence="5">Belongs to the MCTS1 family.</text>
</comment>
<name>MCTS1_MOUSE</name>
<feature type="chain" id="PRO_0000344787" description="Malignant T-cell-amplified sequence 1">
    <location>
        <begin position="1"/>
        <end position="181"/>
    </location>
</feature>
<feature type="domain" description="PUA" evidence="3">
    <location>
        <begin position="92"/>
        <end position="171"/>
    </location>
</feature>
<feature type="modified residue" description="Phosphothreonine" evidence="2">
    <location>
        <position position="81"/>
    </location>
</feature>
<feature type="modified residue" description="Phosphoserine" evidence="2">
    <location>
        <position position="118"/>
    </location>
</feature>
<feature type="splice variant" id="VSP_034857" description="In isoform 2." evidence="4">
    <original>MFKK</original>
    <variation>MGKGR</variation>
    <location>
        <begin position="1"/>
        <end position="4"/>
    </location>
</feature>
<reference key="1">
    <citation type="journal article" date="2005" name="Science">
        <title>The transcriptional landscape of the mammalian genome.</title>
        <authorList>
            <person name="Carninci P."/>
            <person name="Kasukawa T."/>
            <person name="Katayama S."/>
            <person name="Gough J."/>
            <person name="Frith M.C."/>
            <person name="Maeda N."/>
            <person name="Oyama R."/>
            <person name="Ravasi T."/>
            <person name="Lenhard B."/>
            <person name="Wells C."/>
            <person name="Kodzius R."/>
            <person name="Shimokawa K."/>
            <person name="Bajic V.B."/>
            <person name="Brenner S.E."/>
            <person name="Batalov S."/>
            <person name="Forrest A.R."/>
            <person name="Zavolan M."/>
            <person name="Davis M.J."/>
            <person name="Wilming L.G."/>
            <person name="Aidinis V."/>
            <person name="Allen J.E."/>
            <person name="Ambesi-Impiombato A."/>
            <person name="Apweiler R."/>
            <person name="Aturaliya R.N."/>
            <person name="Bailey T.L."/>
            <person name="Bansal M."/>
            <person name="Baxter L."/>
            <person name="Beisel K.W."/>
            <person name="Bersano T."/>
            <person name="Bono H."/>
            <person name="Chalk A.M."/>
            <person name="Chiu K.P."/>
            <person name="Choudhary V."/>
            <person name="Christoffels A."/>
            <person name="Clutterbuck D.R."/>
            <person name="Crowe M.L."/>
            <person name="Dalla E."/>
            <person name="Dalrymple B.P."/>
            <person name="de Bono B."/>
            <person name="Della Gatta G."/>
            <person name="di Bernardo D."/>
            <person name="Down T."/>
            <person name="Engstrom P."/>
            <person name="Fagiolini M."/>
            <person name="Faulkner G."/>
            <person name="Fletcher C.F."/>
            <person name="Fukushima T."/>
            <person name="Furuno M."/>
            <person name="Futaki S."/>
            <person name="Gariboldi M."/>
            <person name="Georgii-Hemming P."/>
            <person name="Gingeras T.R."/>
            <person name="Gojobori T."/>
            <person name="Green R.E."/>
            <person name="Gustincich S."/>
            <person name="Harbers M."/>
            <person name="Hayashi Y."/>
            <person name="Hensch T.K."/>
            <person name="Hirokawa N."/>
            <person name="Hill D."/>
            <person name="Huminiecki L."/>
            <person name="Iacono M."/>
            <person name="Ikeo K."/>
            <person name="Iwama A."/>
            <person name="Ishikawa T."/>
            <person name="Jakt M."/>
            <person name="Kanapin A."/>
            <person name="Katoh M."/>
            <person name="Kawasawa Y."/>
            <person name="Kelso J."/>
            <person name="Kitamura H."/>
            <person name="Kitano H."/>
            <person name="Kollias G."/>
            <person name="Krishnan S.P."/>
            <person name="Kruger A."/>
            <person name="Kummerfeld S.K."/>
            <person name="Kurochkin I.V."/>
            <person name="Lareau L.F."/>
            <person name="Lazarevic D."/>
            <person name="Lipovich L."/>
            <person name="Liu J."/>
            <person name="Liuni S."/>
            <person name="McWilliam S."/>
            <person name="Madan Babu M."/>
            <person name="Madera M."/>
            <person name="Marchionni L."/>
            <person name="Matsuda H."/>
            <person name="Matsuzawa S."/>
            <person name="Miki H."/>
            <person name="Mignone F."/>
            <person name="Miyake S."/>
            <person name="Morris K."/>
            <person name="Mottagui-Tabar S."/>
            <person name="Mulder N."/>
            <person name="Nakano N."/>
            <person name="Nakauchi H."/>
            <person name="Ng P."/>
            <person name="Nilsson R."/>
            <person name="Nishiguchi S."/>
            <person name="Nishikawa S."/>
            <person name="Nori F."/>
            <person name="Ohara O."/>
            <person name="Okazaki Y."/>
            <person name="Orlando V."/>
            <person name="Pang K.C."/>
            <person name="Pavan W.J."/>
            <person name="Pavesi G."/>
            <person name="Pesole G."/>
            <person name="Petrovsky N."/>
            <person name="Piazza S."/>
            <person name="Reed J."/>
            <person name="Reid J.F."/>
            <person name="Ring B.Z."/>
            <person name="Ringwald M."/>
            <person name="Rost B."/>
            <person name="Ruan Y."/>
            <person name="Salzberg S.L."/>
            <person name="Sandelin A."/>
            <person name="Schneider C."/>
            <person name="Schoenbach C."/>
            <person name="Sekiguchi K."/>
            <person name="Semple C.A."/>
            <person name="Seno S."/>
            <person name="Sessa L."/>
            <person name="Sheng Y."/>
            <person name="Shibata Y."/>
            <person name="Shimada H."/>
            <person name="Shimada K."/>
            <person name="Silva D."/>
            <person name="Sinclair B."/>
            <person name="Sperling S."/>
            <person name="Stupka E."/>
            <person name="Sugiura K."/>
            <person name="Sultana R."/>
            <person name="Takenaka Y."/>
            <person name="Taki K."/>
            <person name="Tammoja K."/>
            <person name="Tan S.L."/>
            <person name="Tang S."/>
            <person name="Taylor M.S."/>
            <person name="Tegner J."/>
            <person name="Teichmann S.A."/>
            <person name="Ueda H.R."/>
            <person name="van Nimwegen E."/>
            <person name="Verardo R."/>
            <person name="Wei C.L."/>
            <person name="Yagi K."/>
            <person name="Yamanishi H."/>
            <person name="Zabarovsky E."/>
            <person name="Zhu S."/>
            <person name="Zimmer A."/>
            <person name="Hide W."/>
            <person name="Bult C."/>
            <person name="Grimmond S.M."/>
            <person name="Teasdale R.D."/>
            <person name="Liu E.T."/>
            <person name="Brusic V."/>
            <person name="Quackenbush J."/>
            <person name="Wahlestedt C."/>
            <person name="Mattick J.S."/>
            <person name="Hume D.A."/>
            <person name="Kai C."/>
            <person name="Sasaki D."/>
            <person name="Tomaru Y."/>
            <person name="Fukuda S."/>
            <person name="Kanamori-Katayama M."/>
            <person name="Suzuki M."/>
            <person name="Aoki J."/>
            <person name="Arakawa T."/>
            <person name="Iida J."/>
            <person name="Imamura K."/>
            <person name="Itoh M."/>
            <person name="Kato T."/>
            <person name="Kawaji H."/>
            <person name="Kawagashira N."/>
            <person name="Kawashima T."/>
            <person name="Kojima M."/>
            <person name="Kondo S."/>
            <person name="Konno H."/>
            <person name="Nakano K."/>
            <person name="Ninomiya N."/>
            <person name="Nishio T."/>
            <person name="Okada M."/>
            <person name="Plessy C."/>
            <person name="Shibata K."/>
            <person name="Shiraki T."/>
            <person name="Suzuki S."/>
            <person name="Tagami M."/>
            <person name="Waki K."/>
            <person name="Watahiki A."/>
            <person name="Okamura-Oho Y."/>
            <person name="Suzuki H."/>
            <person name="Kawai J."/>
            <person name="Hayashizaki Y."/>
        </authorList>
    </citation>
    <scope>NUCLEOTIDE SEQUENCE [LARGE SCALE MRNA] (ISOFORMS 1 AND 2)</scope>
    <source>
        <strain>C57BL/6J</strain>
        <strain>NOD</strain>
        <tissue>Cerebellum</tissue>
        <tissue>Hypothalamus</tissue>
        <tissue>Thymus</tissue>
    </source>
</reference>
<reference key="2">
    <citation type="journal article" date="2009" name="PLoS Biol.">
        <title>Lineage-specific biology revealed by a finished genome assembly of the mouse.</title>
        <authorList>
            <person name="Church D.M."/>
            <person name="Goodstadt L."/>
            <person name="Hillier L.W."/>
            <person name="Zody M.C."/>
            <person name="Goldstein S."/>
            <person name="She X."/>
            <person name="Bult C.J."/>
            <person name="Agarwala R."/>
            <person name="Cherry J.L."/>
            <person name="DiCuccio M."/>
            <person name="Hlavina W."/>
            <person name="Kapustin Y."/>
            <person name="Meric P."/>
            <person name="Maglott D."/>
            <person name="Birtle Z."/>
            <person name="Marques A.C."/>
            <person name="Graves T."/>
            <person name="Zhou S."/>
            <person name="Teague B."/>
            <person name="Potamousis K."/>
            <person name="Churas C."/>
            <person name="Place M."/>
            <person name="Herschleb J."/>
            <person name="Runnheim R."/>
            <person name="Forrest D."/>
            <person name="Amos-Landgraf J."/>
            <person name="Schwartz D.C."/>
            <person name="Cheng Z."/>
            <person name="Lindblad-Toh K."/>
            <person name="Eichler E.E."/>
            <person name="Ponting C.P."/>
        </authorList>
    </citation>
    <scope>NUCLEOTIDE SEQUENCE [LARGE SCALE GENOMIC DNA]</scope>
    <source>
        <strain>C57BL/6J</strain>
    </source>
</reference>
<reference key="3">
    <citation type="journal article" date="2004" name="Genome Res.">
        <title>The status, quality, and expansion of the NIH full-length cDNA project: the Mammalian Gene Collection (MGC).</title>
        <authorList>
            <consortium name="The MGC Project Team"/>
        </authorList>
    </citation>
    <scope>NUCLEOTIDE SEQUENCE [LARGE SCALE MRNA] (ISOFORM 1)</scope>
    <source>
        <strain>FVB/N</strain>
        <tissue>Mammary tumor</tissue>
    </source>
</reference>
<reference key="4">
    <citation type="journal article" date="2010" name="Cell">
        <title>A tissue-specific atlas of mouse protein phosphorylation and expression.</title>
        <authorList>
            <person name="Huttlin E.L."/>
            <person name="Jedrychowski M.P."/>
            <person name="Elias J.E."/>
            <person name="Goswami T."/>
            <person name="Rad R."/>
            <person name="Beausoleil S.A."/>
            <person name="Villen J."/>
            <person name="Haas W."/>
            <person name="Sowa M.E."/>
            <person name="Gygi S.P."/>
        </authorList>
    </citation>
    <scope>IDENTIFICATION BY MASS SPECTROMETRY [LARGE SCALE ANALYSIS]</scope>
    <source>
        <tissue>Brain</tissue>
        <tissue>Brown adipose tissue</tissue>
        <tissue>Heart</tissue>
        <tissue>Kidney</tissue>
        <tissue>Liver</tissue>
        <tissue>Lung</tissue>
        <tissue>Pancreas</tissue>
        <tissue>Spleen</tissue>
        <tissue>Testis</tissue>
    </source>
</reference>
<keyword id="KW-0025">Alternative splicing</keyword>
<keyword id="KW-0131">Cell cycle</keyword>
<keyword id="KW-0963">Cytoplasm</keyword>
<keyword id="KW-0227">DNA damage</keyword>
<keyword id="KW-0341">Growth regulation</keyword>
<keyword id="KW-0396">Initiation factor</keyword>
<keyword id="KW-0597">Phosphoprotein</keyword>
<keyword id="KW-0648">Protein biosynthesis</keyword>
<keyword id="KW-1185">Reference proteome</keyword>
<keyword id="KW-0804">Transcription</keyword>
<keyword id="KW-0805">Transcription regulation</keyword>
<keyword id="KW-0043">Tumor suppressor</keyword>
<accession>Q9DB27</accession>
<accession>Q3UUI6</accession>
<proteinExistence type="evidence at protein level"/>
<dbReference type="EMBL" id="AK005292">
    <property type="protein sequence ID" value="BAB23936.1"/>
    <property type="molecule type" value="mRNA"/>
</dbReference>
<dbReference type="EMBL" id="AK087975">
    <property type="protein sequence ID" value="BAC40069.1"/>
    <property type="molecule type" value="mRNA"/>
</dbReference>
<dbReference type="EMBL" id="AK138385">
    <property type="protein sequence ID" value="BAE23639.1"/>
    <property type="molecule type" value="mRNA"/>
</dbReference>
<dbReference type="EMBL" id="AL513356">
    <property type="status" value="NOT_ANNOTATED_CDS"/>
    <property type="molecule type" value="Genomic_DNA"/>
</dbReference>
<dbReference type="EMBL" id="AL845279">
    <property type="status" value="NOT_ANNOTATED_CDS"/>
    <property type="molecule type" value="Genomic_DNA"/>
</dbReference>
<dbReference type="EMBL" id="BC010486">
    <property type="protein sequence ID" value="AAH10486.1"/>
    <property type="molecule type" value="mRNA"/>
</dbReference>
<dbReference type="CCDS" id="CCDS30094.1">
    <molecule id="Q9DB27-1"/>
</dbReference>
<dbReference type="RefSeq" id="NP_001343288.1">
    <molecule id="Q9DB27-2"/>
    <property type="nucleotide sequence ID" value="NM_001356359.1"/>
</dbReference>
<dbReference type="RefSeq" id="NP_001343289.1">
    <molecule id="Q9DB27-2"/>
    <property type="nucleotide sequence ID" value="NM_001356360.1"/>
</dbReference>
<dbReference type="RefSeq" id="NP_081178.1">
    <molecule id="Q9DB27-1"/>
    <property type="nucleotide sequence ID" value="NM_026902.4"/>
</dbReference>
<dbReference type="RefSeq" id="XP_006541598.1">
    <property type="nucleotide sequence ID" value="XM_006541535.2"/>
</dbReference>
<dbReference type="RefSeq" id="XP_036017981.1">
    <molecule id="Q9DB27-1"/>
    <property type="nucleotide sequence ID" value="XM_036162088.1"/>
</dbReference>
<dbReference type="SMR" id="Q9DB27"/>
<dbReference type="BioGRID" id="213164">
    <property type="interactions" value="39"/>
</dbReference>
<dbReference type="FunCoup" id="Q9DB27">
    <property type="interactions" value="1131"/>
</dbReference>
<dbReference type="IntAct" id="Q9DB27">
    <property type="interactions" value="1"/>
</dbReference>
<dbReference type="MINT" id="Q9DB27"/>
<dbReference type="STRING" id="10090.ENSMUSP00000000365"/>
<dbReference type="iPTMnet" id="Q9DB27"/>
<dbReference type="PhosphoSitePlus" id="Q9DB27"/>
<dbReference type="SwissPalm" id="Q9DB27"/>
<dbReference type="jPOST" id="Q9DB27"/>
<dbReference type="PaxDb" id="10090-ENSMUSP00000000365"/>
<dbReference type="PeptideAtlas" id="Q9DB27"/>
<dbReference type="ProteomicsDB" id="295718">
    <molecule id="Q9DB27-1"/>
</dbReference>
<dbReference type="ProteomicsDB" id="295719">
    <molecule id="Q9DB27-2"/>
</dbReference>
<dbReference type="Pumba" id="Q9DB27"/>
<dbReference type="Antibodypedia" id="29908">
    <property type="antibodies" value="279 antibodies from 28 providers"/>
</dbReference>
<dbReference type="DNASU" id="68995"/>
<dbReference type="Ensembl" id="ENSMUST00000000365.3">
    <molecule id="Q9DB27-1"/>
    <property type="protein sequence ID" value="ENSMUSP00000000365.3"/>
    <property type="gene ID" value="ENSMUSG00000000355.14"/>
</dbReference>
<dbReference type="GeneID" id="68995"/>
<dbReference type="KEGG" id="mmu:68995"/>
<dbReference type="UCSC" id="uc009tad.1">
    <molecule id="Q9DB27-1"/>
    <property type="organism name" value="mouse"/>
</dbReference>
<dbReference type="UCSC" id="uc009tae.1">
    <molecule id="Q9DB27-2"/>
    <property type="organism name" value="mouse"/>
</dbReference>
<dbReference type="AGR" id="MGI:1916245"/>
<dbReference type="CTD" id="28985"/>
<dbReference type="MGI" id="MGI:1916245">
    <property type="gene designation" value="Mcts1"/>
</dbReference>
<dbReference type="VEuPathDB" id="HostDB:ENSMUSG00000000355"/>
<dbReference type="eggNOG" id="KOG2523">
    <property type="taxonomic scope" value="Eukaryota"/>
</dbReference>
<dbReference type="GeneTree" id="ENSGT00550000074964"/>
<dbReference type="HOGENOM" id="CLU_090468_0_1_1"/>
<dbReference type="InParanoid" id="Q9DB27"/>
<dbReference type="OMA" id="GVENIHY"/>
<dbReference type="OrthoDB" id="10249667at2759"/>
<dbReference type="PhylomeDB" id="Q9DB27"/>
<dbReference type="TreeFam" id="TF315123"/>
<dbReference type="BioGRID-ORCS" id="68995">
    <property type="hits" value="13 hits in 78 CRISPR screens"/>
</dbReference>
<dbReference type="ChiTaRS" id="Mcts1">
    <property type="organism name" value="mouse"/>
</dbReference>
<dbReference type="PRO" id="PR:Q9DB27"/>
<dbReference type="Proteomes" id="UP000000589">
    <property type="component" value="Chromosome X"/>
</dbReference>
<dbReference type="RNAct" id="Q9DB27">
    <property type="molecule type" value="protein"/>
</dbReference>
<dbReference type="Bgee" id="ENSMUSG00000000355">
    <property type="expression patterns" value="Expressed in facial nucleus and 247 other cell types or tissues"/>
</dbReference>
<dbReference type="GO" id="GO:0005737">
    <property type="term" value="C:cytoplasm"/>
    <property type="evidence" value="ECO:0000250"/>
    <property type="project" value="UniProtKB"/>
</dbReference>
<dbReference type="GO" id="GO:0043024">
    <property type="term" value="F:ribosomal small subunit binding"/>
    <property type="evidence" value="ECO:0000250"/>
    <property type="project" value="UniProtKB"/>
</dbReference>
<dbReference type="GO" id="GO:0000339">
    <property type="term" value="F:RNA cap binding"/>
    <property type="evidence" value="ECO:0000250"/>
    <property type="project" value="UniProtKB"/>
</dbReference>
<dbReference type="GO" id="GO:0003743">
    <property type="term" value="F:translation initiation factor activity"/>
    <property type="evidence" value="ECO:0000250"/>
    <property type="project" value="UniProtKB"/>
</dbReference>
<dbReference type="GO" id="GO:0006974">
    <property type="term" value="P:DNA damage response"/>
    <property type="evidence" value="ECO:0007669"/>
    <property type="project" value="UniProtKB-KW"/>
</dbReference>
<dbReference type="GO" id="GO:0032790">
    <property type="term" value="P:ribosome disassembly"/>
    <property type="evidence" value="ECO:0000250"/>
    <property type="project" value="UniProtKB"/>
</dbReference>
<dbReference type="GO" id="GO:0002188">
    <property type="term" value="P:translation reinitiation"/>
    <property type="evidence" value="ECO:0000250"/>
    <property type="project" value="UniProtKB"/>
</dbReference>
<dbReference type="CDD" id="cd11609">
    <property type="entry name" value="MCT1_N"/>
    <property type="match status" value="1"/>
</dbReference>
<dbReference type="CDD" id="cd21155">
    <property type="entry name" value="PUA_MCTS-1-like"/>
    <property type="match status" value="1"/>
</dbReference>
<dbReference type="FunFam" id="3.10.400.20:FF:000001">
    <property type="entry name" value="Malignant T-cell-amplified sequence 1"/>
    <property type="match status" value="1"/>
</dbReference>
<dbReference type="Gene3D" id="3.10.400.20">
    <property type="match status" value="1"/>
</dbReference>
<dbReference type="InterPro" id="IPR016437">
    <property type="entry name" value="MCT-1/Tma20"/>
</dbReference>
<dbReference type="InterPro" id="IPR041366">
    <property type="entry name" value="Pre-PUA"/>
</dbReference>
<dbReference type="InterPro" id="IPR002478">
    <property type="entry name" value="PUA"/>
</dbReference>
<dbReference type="InterPro" id="IPR015947">
    <property type="entry name" value="PUA-like_sf"/>
</dbReference>
<dbReference type="InterPro" id="IPR004521">
    <property type="entry name" value="Uncharacterised_CHP00451"/>
</dbReference>
<dbReference type="NCBIfam" id="TIGR00451">
    <property type="entry name" value="unchar_dom_2"/>
    <property type="match status" value="1"/>
</dbReference>
<dbReference type="PANTHER" id="PTHR22798:SF10">
    <property type="entry name" value="MALIGNANT T-CELL-AMPLIFIED SEQUENCE 1"/>
    <property type="match status" value="1"/>
</dbReference>
<dbReference type="PANTHER" id="PTHR22798">
    <property type="entry name" value="MCT-1 PROTEIN"/>
    <property type="match status" value="1"/>
</dbReference>
<dbReference type="Pfam" id="PF17832">
    <property type="entry name" value="Pre-PUA"/>
    <property type="match status" value="1"/>
</dbReference>
<dbReference type="Pfam" id="PF01472">
    <property type="entry name" value="PUA"/>
    <property type="match status" value="1"/>
</dbReference>
<dbReference type="PIRSF" id="PIRSF005067">
    <property type="entry name" value="Tma_RNA-bind_prd"/>
    <property type="match status" value="1"/>
</dbReference>
<dbReference type="SMART" id="SM00359">
    <property type="entry name" value="PUA"/>
    <property type="match status" value="1"/>
</dbReference>
<dbReference type="SUPFAM" id="SSF88697">
    <property type="entry name" value="PUA domain-like"/>
    <property type="match status" value="1"/>
</dbReference>
<dbReference type="PROSITE" id="PS50890">
    <property type="entry name" value="PUA"/>
    <property type="match status" value="1"/>
</dbReference>
<evidence type="ECO:0000250" key="1"/>
<evidence type="ECO:0000250" key="2">
    <source>
        <dbReference type="UniProtKB" id="Q9ULC4"/>
    </source>
</evidence>
<evidence type="ECO:0000255" key="3">
    <source>
        <dbReference type="PROSITE-ProRule" id="PRU00161"/>
    </source>
</evidence>
<evidence type="ECO:0000303" key="4">
    <source>
    </source>
</evidence>
<evidence type="ECO:0000305" key="5"/>
<protein>
    <recommendedName>
        <fullName>Malignant T-cell-amplified sequence 1</fullName>
        <shortName>MCT-1</shortName>
    </recommendedName>
    <alternativeName>
        <fullName>Multiple copies T-cell malignancies 1</fullName>
    </alternativeName>
</protein>